<comment type="function">
    <text evidence="1">ATP-dependent specificity component of the Clp protease. It directs the protease to specific substrates. Can perform chaperone functions in the absence of ClpP.</text>
</comment>
<comment type="subunit">
    <text evidence="1">Component of the ClpX-ClpP complex. Forms a hexameric ring that, in the presence of ATP, binds to fourteen ClpP subunits assembled into a disk-like structure with a central cavity, resembling the structure of eukaryotic proteasomes.</text>
</comment>
<comment type="similarity">
    <text evidence="1">Belongs to the ClpX chaperone family.</text>
</comment>
<protein>
    <recommendedName>
        <fullName evidence="1">ATP-dependent Clp protease ATP-binding subunit ClpX</fullName>
    </recommendedName>
</protein>
<feature type="chain" id="PRO_0000160342" description="ATP-dependent Clp protease ATP-binding subunit ClpX">
    <location>
        <begin position="1"/>
        <end position="432"/>
    </location>
</feature>
<feature type="domain" description="ClpX-type ZB" evidence="2">
    <location>
        <begin position="1"/>
        <end position="53"/>
    </location>
</feature>
<feature type="region of interest" description="Disordered" evidence="3">
    <location>
        <begin position="411"/>
        <end position="432"/>
    </location>
</feature>
<feature type="binding site" evidence="2">
    <location>
        <position position="12"/>
    </location>
    <ligand>
        <name>Zn(2+)</name>
        <dbReference type="ChEBI" id="CHEBI:29105"/>
    </ligand>
</feature>
<feature type="binding site" evidence="2">
    <location>
        <position position="15"/>
    </location>
    <ligand>
        <name>Zn(2+)</name>
        <dbReference type="ChEBI" id="CHEBI:29105"/>
    </ligand>
</feature>
<feature type="binding site" evidence="2">
    <location>
        <position position="34"/>
    </location>
    <ligand>
        <name>Zn(2+)</name>
        <dbReference type="ChEBI" id="CHEBI:29105"/>
    </ligand>
</feature>
<feature type="binding site" evidence="2">
    <location>
        <position position="37"/>
    </location>
    <ligand>
        <name>Zn(2+)</name>
        <dbReference type="ChEBI" id="CHEBI:29105"/>
    </ligand>
</feature>
<feature type="binding site" evidence="1">
    <location>
        <begin position="117"/>
        <end position="124"/>
    </location>
    <ligand>
        <name>ATP</name>
        <dbReference type="ChEBI" id="CHEBI:30616"/>
    </ligand>
</feature>
<sequence>MAKYDNKKQLRCSFCGKSQDQVKRLIAGPGVYICDECIELCSEIIADEFEETPQINVGSLPKPSEIKDYLDQYVVGQEDAKKSLSVAVYNHYKRINSNLSNNDDIELQKSNILLLGPTGCGKTFLAQTLAKFLNVPFAIADATTLTEAGYVGEDVENILLKLIQNADYDVERAEKGIIYIDEIDKIARKSENPSITRDVSGEGVQQALLKILEGTVASVPPQGGRKHPHQEFIQINTTNILFICGGAFDGVDKIIENRTRVSTIGFGASIQSKQQKDIGAILKKIMPGDLLKFGLIPEFIGRLPIIVTLNSLDQGALVKVLSEPKNALVKQYEKLLQMDNVELEFKDGALKAIASEAISRSTGARGLRAIVEDIMKDIMFDIPSREDVKKVIVTENTINTKQPELVLEEGAKAIEAPKKKEKSKTKKDIESA</sequence>
<name>CLPX_CLOAB</name>
<accession>Q97FT7</accession>
<organism>
    <name type="scientific">Clostridium acetobutylicum (strain ATCC 824 / DSM 792 / JCM 1419 / IAM 19013 / LMG 5710 / NBRC 13948 / NRRL B-527 / VKM B-1787 / 2291 / W)</name>
    <dbReference type="NCBI Taxonomy" id="272562"/>
    <lineage>
        <taxon>Bacteria</taxon>
        <taxon>Bacillati</taxon>
        <taxon>Bacillota</taxon>
        <taxon>Clostridia</taxon>
        <taxon>Eubacteriales</taxon>
        <taxon>Clostridiaceae</taxon>
        <taxon>Clostridium</taxon>
    </lineage>
</organism>
<keyword id="KW-0067">ATP-binding</keyword>
<keyword id="KW-0143">Chaperone</keyword>
<keyword id="KW-0479">Metal-binding</keyword>
<keyword id="KW-0547">Nucleotide-binding</keyword>
<keyword id="KW-1185">Reference proteome</keyword>
<keyword id="KW-0862">Zinc</keyword>
<proteinExistence type="inferred from homology"/>
<gene>
    <name evidence="1" type="primary">clpX</name>
    <name type="ordered locus">CA_C2639</name>
</gene>
<evidence type="ECO:0000255" key="1">
    <source>
        <dbReference type="HAMAP-Rule" id="MF_00175"/>
    </source>
</evidence>
<evidence type="ECO:0000255" key="2">
    <source>
        <dbReference type="PROSITE-ProRule" id="PRU01250"/>
    </source>
</evidence>
<evidence type="ECO:0000256" key="3">
    <source>
        <dbReference type="SAM" id="MobiDB-lite"/>
    </source>
</evidence>
<reference key="1">
    <citation type="journal article" date="2001" name="J. Bacteriol.">
        <title>Genome sequence and comparative analysis of the solvent-producing bacterium Clostridium acetobutylicum.</title>
        <authorList>
            <person name="Noelling J."/>
            <person name="Breton G."/>
            <person name="Omelchenko M.V."/>
            <person name="Makarova K.S."/>
            <person name="Zeng Q."/>
            <person name="Gibson R."/>
            <person name="Lee H.M."/>
            <person name="Dubois J."/>
            <person name="Qiu D."/>
            <person name="Hitti J."/>
            <person name="Wolf Y.I."/>
            <person name="Tatusov R.L."/>
            <person name="Sabathe F."/>
            <person name="Doucette-Stamm L.A."/>
            <person name="Soucaille P."/>
            <person name="Daly M.J."/>
            <person name="Bennett G.N."/>
            <person name="Koonin E.V."/>
            <person name="Smith D.R."/>
        </authorList>
    </citation>
    <scope>NUCLEOTIDE SEQUENCE [LARGE SCALE GENOMIC DNA]</scope>
    <source>
        <strain>ATCC 824 / DSM 792 / JCM 1419 / IAM 19013 / LMG 5710 / NBRC 13948 / NRRL B-527 / VKM B-1787 / 2291 / W</strain>
    </source>
</reference>
<dbReference type="EMBL" id="AE001437">
    <property type="protein sequence ID" value="AAK80586.1"/>
    <property type="molecule type" value="Genomic_DNA"/>
</dbReference>
<dbReference type="PIR" id="G97224">
    <property type="entry name" value="G97224"/>
</dbReference>
<dbReference type="RefSeq" id="NP_349246.1">
    <property type="nucleotide sequence ID" value="NC_003030.1"/>
</dbReference>
<dbReference type="RefSeq" id="WP_010965927.1">
    <property type="nucleotide sequence ID" value="NC_003030.1"/>
</dbReference>
<dbReference type="SMR" id="Q97FT7"/>
<dbReference type="STRING" id="272562.CA_C2639"/>
<dbReference type="GeneID" id="44999107"/>
<dbReference type="KEGG" id="cac:CA_C2639"/>
<dbReference type="PATRIC" id="fig|272562.8.peg.2828"/>
<dbReference type="eggNOG" id="COG1219">
    <property type="taxonomic scope" value="Bacteria"/>
</dbReference>
<dbReference type="HOGENOM" id="CLU_014218_8_2_9"/>
<dbReference type="OrthoDB" id="9804062at2"/>
<dbReference type="Proteomes" id="UP000000814">
    <property type="component" value="Chromosome"/>
</dbReference>
<dbReference type="GO" id="GO:0009376">
    <property type="term" value="C:HslUV protease complex"/>
    <property type="evidence" value="ECO:0007669"/>
    <property type="project" value="TreeGrafter"/>
</dbReference>
<dbReference type="GO" id="GO:0005524">
    <property type="term" value="F:ATP binding"/>
    <property type="evidence" value="ECO:0007669"/>
    <property type="project" value="UniProtKB-UniRule"/>
</dbReference>
<dbReference type="GO" id="GO:0016887">
    <property type="term" value="F:ATP hydrolysis activity"/>
    <property type="evidence" value="ECO:0007669"/>
    <property type="project" value="InterPro"/>
</dbReference>
<dbReference type="GO" id="GO:0140662">
    <property type="term" value="F:ATP-dependent protein folding chaperone"/>
    <property type="evidence" value="ECO:0007669"/>
    <property type="project" value="InterPro"/>
</dbReference>
<dbReference type="GO" id="GO:0046983">
    <property type="term" value="F:protein dimerization activity"/>
    <property type="evidence" value="ECO:0007669"/>
    <property type="project" value="InterPro"/>
</dbReference>
<dbReference type="GO" id="GO:0051082">
    <property type="term" value="F:unfolded protein binding"/>
    <property type="evidence" value="ECO:0007669"/>
    <property type="project" value="UniProtKB-UniRule"/>
</dbReference>
<dbReference type="GO" id="GO:0008270">
    <property type="term" value="F:zinc ion binding"/>
    <property type="evidence" value="ECO:0007669"/>
    <property type="project" value="InterPro"/>
</dbReference>
<dbReference type="GO" id="GO:0051301">
    <property type="term" value="P:cell division"/>
    <property type="evidence" value="ECO:0007669"/>
    <property type="project" value="TreeGrafter"/>
</dbReference>
<dbReference type="GO" id="GO:0051603">
    <property type="term" value="P:proteolysis involved in protein catabolic process"/>
    <property type="evidence" value="ECO:0007669"/>
    <property type="project" value="TreeGrafter"/>
</dbReference>
<dbReference type="CDD" id="cd19497">
    <property type="entry name" value="RecA-like_ClpX"/>
    <property type="match status" value="1"/>
</dbReference>
<dbReference type="FunFam" id="1.10.8.60:FF:000002">
    <property type="entry name" value="ATP-dependent Clp protease ATP-binding subunit ClpX"/>
    <property type="match status" value="1"/>
</dbReference>
<dbReference type="FunFam" id="3.40.50.300:FF:000005">
    <property type="entry name" value="ATP-dependent Clp protease ATP-binding subunit ClpX"/>
    <property type="match status" value="1"/>
</dbReference>
<dbReference type="Gene3D" id="1.10.8.60">
    <property type="match status" value="1"/>
</dbReference>
<dbReference type="Gene3D" id="6.20.220.10">
    <property type="entry name" value="ClpX chaperone, C4-type zinc finger domain"/>
    <property type="match status" value="1"/>
</dbReference>
<dbReference type="Gene3D" id="3.40.50.300">
    <property type="entry name" value="P-loop containing nucleotide triphosphate hydrolases"/>
    <property type="match status" value="1"/>
</dbReference>
<dbReference type="HAMAP" id="MF_00175">
    <property type="entry name" value="ClpX"/>
    <property type="match status" value="1"/>
</dbReference>
<dbReference type="InterPro" id="IPR003593">
    <property type="entry name" value="AAA+_ATPase"/>
</dbReference>
<dbReference type="InterPro" id="IPR050052">
    <property type="entry name" value="ATP-dep_Clp_protease_ClpX"/>
</dbReference>
<dbReference type="InterPro" id="IPR003959">
    <property type="entry name" value="ATPase_AAA_core"/>
</dbReference>
<dbReference type="InterPro" id="IPR019489">
    <property type="entry name" value="Clp_ATPase_C"/>
</dbReference>
<dbReference type="InterPro" id="IPR004487">
    <property type="entry name" value="Clp_protease_ATP-bd_su_ClpX"/>
</dbReference>
<dbReference type="InterPro" id="IPR046425">
    <property type="entry name" value="ClpX_bact"/>
</dbReference>
<dbReference type="InterPro" id="IPR027417">
    <property type="entry name" value="P-loop_NTPase"/>
</dbReference>
<dbReference type="InterPro" id="IPR010603">
    <property type="entry name" value="Znf_CppX_C4"/>
</dbReference>
<dbReference type="InterPro" id="IPR038366">
    <property type="entry name" value="Znf_CppX_C4_sf"/>
</dbReference>
<dbReference type="NCBIfam" id="TIGR00382">
    <property type="entry name" value="clpX"/>
    <property type="match status" value="1"/>
</dbReference>
<dbReference type="NCBIfam" id="NF003745">
    <property type="entry name" value="PRK05342.1"/>
    <property type="match status" value="1"/>
</dbReference>
<dbReference type="PANTHER" id="PTHR48102:SF7">
    <property type="entry name" value="ATP-DEPENDENT CLP PROTEASE ATP-BINDING SUBUNIT CLPX-LIKE, MITOCHONDRIAL"/>
    <property type="match status" value="1"/>
</dbReference>
<dbReference type="PANTHER" id="PTHR48102">
    <property type="entry name" value="ATP-DEPENDENT CLP PROTEASE ATP-BINDING SUBUNIT CLPX-LIKE, MITOCHONDRIAL-RELATED"/>
    <property type="match status" value="1"/>
</dbReference>
<dbReference type="Pfam" id="PF07724">
    <property type="entry name" value="AAA_2"/>
    <property type="match status" value="1"/>
</dbReference>
<dbReference type="Pfam" id="PF10431">
    <property type="entry name" value="ClpB_D2-small"/>
    <property type="match status" value="1"/>
</dbReference>
<dbReference type="Pfam" id="PF06689">
    <property type="entry name" value="zf-C4_ClpX"/>
    <property type="match status" value="1"/>
</dbReference>
<dbReference type="SMART" id="SM00382">
    <property type="entry name" value="AAA"/>
    <property type="match status" value="1"/>
</dbReference>
<dbReference type="SMART" id="SM01086">
    <property type="entry name" value="ClpB_D2-small"/>
    <property type="match status" value="1"/>
</dbReference>
<dbReference type="SMART" id="SM00994">
    <property type="entry name" value="zf-C4_ClpX"/>
    <property type="match status" value="1"/>
</dbReference>
<dbReference type="SUPFAM" id="SSF57716">
    <property type="entry name" value="Glucocorticoid receptor-like (DNA-binding domain)"/>
    <property type="match status" value="1"/>
</dbReference>
<dbReference type="SUPFAM" id="SSF52540">
    <property type="entry name" value="P-loop containing nucleoside triphosphate hydrolases"/>
    <property type="match status" value="1"/>
</dbReference>
<dbReference type="PROSITE" id="PS51902">
    <property type="entry name" value="CLPX_ZB"/>
    <property type="match status" value="1"/>
</dbReference>